<protein>
    <recommendedName>
        <fullName evidence="3">Pyrimidine-nucleoside phosphorylase</fullName>
        <shortName evidence="4">PYNP</shortName>
        <shortName evidence="3">Py-NPase</shortName>
        <ecNumber evidence="1">2.4.2.2</ecNumber>
    </recommendedName>
</protein>
<proteinExistence type="evidence at protein level"/>
<sequence>MRMVDLIEKKRDGHALTKEEIQFIIEGYTKGDIPDYQMSALAMAIFFRGMNEEETAELTMAMVHSGDTIDLSRIEGIKVDKHSTGGVGDTTTLVLGPLVASVGVPVAKMSGRGLGHTGGTIDKLESVPGFHVEITNDEFIDLVNKNKIAVVGQSGNLTPADKKLYALRDVTATVNSIPLIASSIMSKKIAAGADAIVLDVKTGVGAFMKDLNDAKALAKAMVDIGNRVGRKTMAIISDMSQPLGYAIGNALEVKEAIDTLKGEGPEDFQELCLVLGSHMVYLAEKASSLEEARHMLEKAMKDGSALQTFKTFLAAQGGDASVVDDPSKLPQAKYIIELEAKEDGYVSEIVADAVGTAAMWLGAGRATKESTIDLAVGLVLRKKVGDAVKKGESLVTIYSNREQVDDVKQKLYENIRISATPVQAPTLIYDKIS</sequence>
<keyword id="KW-0002">3D-structure</keyword>
<keyword id="KW-0903">Direct protein sequencing</keyword>
<keyword id="KW-0328">Glycosyltransferase</keyword>
<keyword id="KW-0479">Metal-binding</keyword>
<keyword id="KW-0630">Potassium</keyword>
<keyword id="KW-0808">Transferase</keyword>
<reference key="1">
    <citation type="journal article" date="1996" name="Biosci. Biotechnol. Biochem.">
        <title>Molecular cloning and expression of the pyrimidine nucleoside phosphorylase gene from Bacillus stearothermophilus TH 6-2.</title>
        <authorList>
            <person name="Okuyama K."/>
            <person name="Hamamoto T."/>
            <person name="Noguchi T."/>
            <person name="Midorikawa Y."/>
        </authorList>
    </citation>
    <scope>NUCLEOTIDE SEQUENCE [GENOMIC DNA]</scope>
    <source>
        <strain>TH 6-2</strain>
    </source>
</reference>
<reference key="2">
    <citation type="journal article" date="1996" name="Biosci. Biotechnol. Biochem.">
        <title>Purification and characterization of purine nucleoside phosphorylase and pyrimidine nucleoside phosphorylase from Bacillus stearothermophilus TH 6-2.</title>
        <authorList>
            <person name="Hamamoto T."/>
            <person name="Noguchi T."/>
            <person name="Midorikawa Y."/>
        </authorList>
    </citation>
    <scope>PROTEIN SEQUENCE OF 1-12</scope>
    <scope>FUNCTION</scope>
    <scope>CATALYTIC ACTIVITY</scope>
    <scope>SUBSTRATE SPECIFICITY</scope>
    <scope>SUBUNIT</scope>
    <source>
        <strain>TH 6-2</strain>
    </source>
</reference>
<reference key="3">
    <citation type="journal article" date="1998" name="Structure">
        <title>The crystal structure of pyrimidine nucleoside phosphorylase in a closed conformation.</title>
        <authorList>
            <person name="Pugmire M.J."/>
            <person name="Ealick S.E."/>
        </authorList>
    </citation>
    <scope>X-RAY CRYSTALLOGRAPHY (2.1 ANGSTROMS) OF 1-432 IN COMPLEX WITH PSEUDOURIDINE; PHOSPHATE AND POTASSIUM</scope>
    <scope>COFACTOR</scope>
</reference>
<feature type="chain" id="PRO_0000059083" description="Pyrimidine-nucleoside phosphorylase">
    <location>
        <begin position="1"/>
        <end position="433"/>
    </location>
</feature>
<feature type="binding site" evidence="2 6">
    <location>
        <begin position="81"/>
        <end position="83"/>
    </location>
    <ligand>
        <name>phosphate</name>
        <dbReference type="ChEBI" id="CHEBI:43474"/>
    </ligand>
</feature>
<feature type="binding site" evidence="2 6">
    <location>
        <position position="88"/>
    </location>
    <ligand>
        <name>K(+)</name>
        <dbReference type="ChEBI" id="CHEBI:29103"/>
    </ligand>
</feature>
<feature type="binding site" evidence="2 6">
    <location>
        <position position="90"/>
    </location>
    <ligand>
        <name>K(+)</name>
        <dbReference type="ChEBI" id="CHEBI:29103"/>
    </ligand>
</feature>
<feature type="binding site" evidence="2 6">
    <location>
        <position position="92"/>
    </location>
    <ligand>
        <name>phosphate</name>
        <dbReference type="ChEBI" id="CHEBI:43474"/>
    </ligand>
</feature>
<feature type="binding site" evidence="2 6">
    <location>
        <begin position="108"/>
        <end position="110"/>
    </location>
    <ligand>
        <name>phosphate</name>
        <dbReference type="ChEBI" id="CHEBI:43474"/>
    </ligand>
</feature>
<feature type="binding site" evidence="2 6">
    <location>
        <position position="120"/>
    </location>
    <ligand>
        <name>phosphate</name>
        <dbReference type="ChEBI" id="CHEBI:43474"/>
    </ligand>
</feature>
<feature type="binding site" evidence="2 6">
    <location>
        <position position="168"/>
    </location>
    <ligand>
        <name>substrate</name>
    </ligand>
</feature>
<feature type="binding site" evidence="2 6">
    <location>
        <position position="187"/>
    </location>
    <ligand>
        <name>substrate</name>
    </ligand>
</feature>
<feature type="binding site" evidence="2 6">
    <location>
        <position position="243"/>
    </location>
    <ligand>
        <name>K(+)</name>
        <dbReference type="ChEBI" id="CHEBI:29103"/>
    </ligand>
</feature>
<feature type="binding site" evidence="2 6">
    <location>
        <position position="246"/>
    </location>
    <ligand>
        <name>K(+)</name>
        <dbReference type="ChEBI" id="CHEBI:29103"/>
    </ligand>
</feature>
<feature type="binding site" evidence="2 6">
    <location>
        <position position="255"/>
    </location>
    <ligand>
        <name>K(+)</name>
        <dbReference type="ChEBI" id="CHEBI:29103"/>
    </ligand>
</feature>
<feature type="helix" evidence="7">
    <location>
        <begin position="3"/>
        <end position="11"/>
    </location>
</feature>
<feature type="helix" evidence="7">
    <location>
        <begin position="18"/>
        <end position="29"/>
    </location>
</feature>
<feature type="helix" evidence="7">
    <location>
        <begin position="35"/>
        <end position="48"/>
    </location>
</feature>
<feature type="helix" evidence="7">
    <location>
        <begin position="52"/>
        <end position="64"/>
    </location>
</feature>
<feature type="strand" evidence="7">
    <location>
        <begin position="79"/>
        <end position="83"/>
    </location>
</feature>
<feature type="helix" evidence="7">
    <location>
        <begin position="91"/>
        <end position="100"/>
    </location>
</feature>
<feature type="turn" evidence="7">
    <location>
        <begin position="101"/>
        <end position="103"/>
    </location>
</feature>
<feature type="strand" evidence="7">
    <location>
        <begin position="106"/>
        <end position="110"/>
    </location>
</feature>
<feature type="helix" evidence="7">
    <location>
        <begin position="120"/>
        <end position="124"/>
    </location>
</feature>
<feature type="helix" evidence="7">
    <location>
        <begin position="136"/>
        <end position="146"/>
    </location>
</feature>
<feature type="strand" evidence="7">
    <location>
        <begin position="147"/>
        <end position="152"/>
    </location>
</feature>
<feature type="helix" evidence="7">
    <location>
        <begin position="159"/>
        <end position="170"/>
    </location>
</feature>
<feature type="helix" evidence="7">
    <location>
        <begin position="177"/>
        <end position="191"/>
    </location>
</feature>
<feature type="strand" evidence="7">
    <location>
        <begin position="194"/>
        <end position="203"/>
    </location>
</feature>
<feature type="helix" evidence="7">
    <location>
        <begin position="211"/>
        <end position="227"/>
    </location>
</feature>
<feature type="strand" evidence="7">
    <location>
        <begin position="231"/>
        <end position="238"/>
    </location>
</feature>
<feature type="strand" evidence="7">
    <location>
        <begin position="243"/>
        <end position="249"/>
    </location>
</feature>
<feature type="helix" evidence="7">
    <location>
        <begin position="250"/>
        <end position="260"/>
    </location>
</feature>
<feature type="helix" evidence="7">
    <location>
        <begin position="266"/>
        <end position="282"/>
    </location>
</feature>
<feature type="strand" evidence="7">
    <location>
        <begin position="285"/>
        <end position="288"/>
    </location>
</feature>
<feature type="helix" evidence="7">
    <location>
        <begin position="289"/>
        <end position="302"/>
    </location>
</feature>
<feature type="helix" evidence="7">
    <location>
        <begin position="304"/>
        <end position="315"/>
    </location>
</feature>
<feature type="helix" evidence="7">
    <location>
        <begin position="320"/>
        <end position="322"/>
    </location>
</feature>
<feature type="helix" evidence="7">
    <location>
        <begin position="326"/>
        <end position="328"/>
    </location>
</feature>
<feature type="strand" evidence="7">
    <location>
        <begin position="333"/>
        <end position="339"/>
    </location>
</feature>
<feature type="strand" evidence="7">
    <location>
        <begin position="341"/>
        <end position="349"/>
    </location>
</feature>
<feature type="helix" evidence="7">
    <location>
        <begin position="351"/>
        <end position="361"/>
    </location>
</feature>
<feature type="strand" evidence="7">
    <location>
        <begin position="377"/>
        <end position="381"/>
    </location>
</feature>
<feature type="strand" evidence="7">
    <location>
        <begin position="393"/>
        <end position="402"/>
    </location>
</feature>
<feature type="helix" evidence="7">
    <location>
        <begin position="405"/>
        <end position="412"/>
    </location>
</feature>
<feature type="strand" evidence="7">
    <location>
        <begin position="415"/>
        <end position="420"/>
    </location>
</feature>
<feature type="strand" evidence="7">
    <location>
        <begin position="427"/>
        <end position="432"/>
    </location>
</feature>
<accession>P77836</accession>
<name>PDP_GEOSE</name>
<evidence type="ECO:0000269" key="1">
    <source>
    </source>
</evidence>
<evidence type="ECO:0000269" key="2">
    <source>
    </source>
</evidence>
<evidence type="ECO:0000303" key="3">
    <source>
    </source>
</evidence>
<evidence type="ECO:0000303" key="4">
    <source>
    </source>
</evidence>
<evidence type="ECO:0000305" key="5"/>
<evidence type="ECO:0007744" key="6">
    <source>
        <dbReference type="PDB" id="1BRW"/>
    </source>
</evidence>
<evidence type="ECO:0007829" key="7">
    <source>
        <dbReference type="PDB" id="1BRW"/>
    </source>
</evidence>
<dbReference type="EC" id="2.4.2.2" evidence="1"/>
<dbReference type="EMBL" id="D87961">
    <property type="protein sequence ID" value="BAA13512.1"/>
    <property type="molecule type" value="Genomic_DNA"/>
</dbReference>
<dbReference type="EMBL" id="D87959">
    <property type="protein sequence ID" value="BAA20903.1"/>
    <property type="molecule type" value="Genomic_DNA"/>
</dbReference>
<dbReference type="PIR" id="JT0875">
    <property type="entry name" value="JT0875"/>
</dbReference>
<dbReference type="PDB" id="1BRW">
    <property type="method" value="X-ray"/>
    <property type="resolution" value="2.10 A"/>
    <property type="chains" value="A/B=1-432"/>
</dbReference>
<dbReference type="PDBsum" id="1BRW"/>
<dbReference type="SMR" id="P77836"/>
<dbReference type="DrugBank" id="DB03419">
    <property type="generic name" value="Uracil"/>
</dbReference>
<dbReference type="KEGG" id="ag:BAA13512"/>
<dbReference type="BioCyc" id="MetaCyc:MONOMER-17881"/>
<dbReference type="BRENDA" id="2.4.2.2">
    <property type="organism ID" value="623"/>
</dbReference>
<dbReference type="EvolutionaryTrace" id="P77836"/>
<dbReference type="GO" id="GO:0005829">
    <property type="term" value="C:cytosol"/>
    <property type="evidence" value="ECO:0007669"/>
    <property type="project" value="TreeGrafter"/>
</dbReference>
<dbReference type="GO" id="GO:0004645">
    <property type="term" value="F:1,4-alpha-oligoglucan phosphorylase activity"/>
    <property type="evidence" value="ECO:0007669"/>
    <property type="project" value="InterPro"/>
</dbReference>
<dbReference type="GO" id="GO:0047847">
    <property type="term" value="F:deoxyuridine phosphorylase activity"/>
    <property type="evidence" value="ECO:0007669"/>
    <property type="project" value="RHEA"/>
</dbReference>
<dbReference type="GO" id="GO:0046872">
    <property type="term" value="F:metal ion binding"/>
    <property type="evidence" value="ECO:0007669"/>
    <property type="project" value="UniProtKB-KW"/>
</dbReference>
<dbReference type="GO" id="GO:0009032">
    <property type="term" value="F:thymidine phosphorylase activity"/>
    <property type="evidence" value="ECO:0000250"/>
    <property type="project" value="CAFA"/>
</dbReference>
<dbReference type="GO" id="GO:0004850">
    <property type="term" value="F:uridine phosphorylase activity"/>
    <property type="evidence" value="ECO:0007669"/>
    <property type="project" value="RHEA"/>
</dbReference>
<dbReference type="GO" id="GO:0006206">
    <property type="term" value="P:pyrimidine nucleobase metabolic process"/>
    <property type="evidence" value="ECO:0007669"/>
    <property type="project" value="InterPro"/>
</dbReference>
<dbReference type="GO" id="GO:0006213">
    <property type="term" value="P:pyrimidine nucleoside metabolic process"/>
    <property type="evidence" value="ECO:0000250"/>
    <property type="project" value="CAFA"/>
</dbReference>
<dbReference type="FunFam" id="1.20.970.10:FF:000002">
    <property type="entry name" value="Pyrimidine-nucleoside phosphorylase"/>
    <property type="match status" value="1"/>
</dbReference>
<dbReference type="FunFam" id="3.40.1030.10:FF:000003">
    <property type="entry name" value="Pyrimidine-nucleoside phosphorylase"/>
    <property type="match status" value="1"/>
</dbReference>
<dbReference type="FunFam" id="3.90.1170.30:FF:000002">
    <property type="entry name" value="Pyrimidine-nucleoside phosphorylase"/>
    <property type="match status" value="1"/>
</dbReference>
<dbReference type="Gene3D" id="3.40.1030.10">
    <property type="entry name" value="Nucleoside phosphorylase/phosphoribosyltransferase catalytic domain"/>
    <property type="match status" value="1"/>
</dbReference>
<dbReference type="Gene3D" id="3.90.1170.30">
    <property type="entry name" value="Pyrimidine nucleoside phosphorylase-like, C-terminal domain"/>
    <property type="match status" value="1"/>
</dbReference>
<dbReference type="Gene3D" id="1.20.970.10">
    <property type="entry name" value="Transferase, Pyrimidine Nucleoside Phosphorylase, Chain C"/>
    <property type="match status" value="1"/>
</dbReference>
<dbReference type="InterPro" id="IPR000312">
    <property type="entry name" value="Glycosyl_Trfase_fam3"/>
</dbReference>
<dbReference type="InterPro" id="IPR017459">
    <property type="entry name" value="Glycosyl_Trfase_fam3_N_dom"/>
</dbReference>
<dbReference type="InterPro" id="IPR036320">
    <property type="entry name" value="Glycosyl_Trfase_fam3_N_dom_sf"/>
</dbReference>
<dbReference type="InterPro" id="IPR035902">
    <property type="entry name" value="Nuc_phospho_transferase"/>
</dbReference>
<dbReference type="InterPro" id="IPR036566">
    <property type="entry name" value="PYNP-like_C_sf"/>
</dbReference>
<dbReference type="InterPro" id="IPR013102">
    <property type="entry name" value="PYNP_C"/>
</dbReference>
<dbReference type="InterPro" id="IPR018090">
    <property type="entry name" value="Pyrmidine_PPas_bac/euk"/>
</dbReference>
<dbReference type="InterPro" id="IPR017872">
    <property type="entry name" value="Pyrmidine_PPase_CS"/>
</dbReference>
<dbReference type="InterPro" id="IPR000053">
    <property type="entry name" value="Thymidine/pyrmidine_PPase"/>
</dbReference>
<dbReference type="NCBIfam" id="NF004490">
    <property type="entry name" value="PRK05820.1"/>
    <property type="match status" value="1"/>
</dbReference>
<dbReference type="NCBIfam" id="NF004747">
    <property type="entry name" value="PRK06078.1"/>
    <property type="match status" value="1"/>
</dbReference>
<dbReference type="NCBIfam" id="TIGR02644">
    <property type="entry name" value="Y_phosphoryl"/>
    <property type="match status" value="1"/>
</dbReference>
<dbReference type="PANTHER" id="PTHR10515">
    <property type="entry name" value="THYMIDINE PHOSPHORYLASE"/>
    <property type="match status" value="1"/>
</dbReference>
<dbReference type="PANTHER" id="PTHR10515:SF0">
    <property type="entry name" value="THYMIDINE PHOSPHORYLASE"/>
    <property type="match status" value="1"/>
</dbReference>
<dbReference type="Pfam" id="PF02885">
    <property type="entry name" value="Glycos_trans_3N"/>
    <property type="match status" value="1"/>
</dbReference>
<dbReference type="Pfam" id="PF00591">
    <property type="entry name" value="Glycos_transf_3"/>
    <property type="match status" value="1"/>
</dbReference>
<dbReference type="Pfam" id="PF07831">
    <property type="entry name" value="PYNP_C"/>
    <property type="match status" value="1"/>
</dbReference>
<dbReference type="PIRSF" id="PIRSF000478">
    <property type="entry name" value="TP_PyNP"/>
    <property type="match status" value="1"/>
</dbReference>
<dbReference type="SMART" id="SM00941">
    <property type="entry name" value="PYNP_C"/>
    <property type="match status" value="1"/>
</dbReference>
<dbReference type="SUPFAM" id="SSF52418">
    <property type="entry name" value="Nucleoside phosphorylase/phosphoribosyltransferase catalytic domain"/>
    <property type="match status" value="1"/>
</dbReference>
<dbReference type="SUPFAM" id="SSF47648">
    <property type="entry name" value="Nucleoside phosphorylase/phosphoribosyltransferase N-terminal domain"/>
    <property type="match status" value="1"/>
</dbReference>
<dbReference type="SUPFAM" id="SSF54680">
    <property type="entry name" value="Pyrimidine nucleoside phosphorylase C-terminal domain"/>
    <property type="match status" value="1"/>
</dbReference>
<dbReference type="PROSITE" id="PS00647">
    <property type="entry name" value="THYMID_PHOSPHORYLASE"/>
    <property type="match status" value="1"/>
</dbReference>
<organism>
    <name type="scientific">Geobacillus stearothermophilus</name>
    <name type="common">Bacillus stearothermophilus</name>
    <dbReference type="NCBI Taxonomy" id="1422"/>
    <lineage>
        <taxon>Bacteria</taxon>
        <taxon>Bacillati</taxon>
        <taxon>Bacillota</taxon>
        <taxon>Bacilli</taxon>
        <taxon>Bacillales</taxon>
        <taxon>Anoxybacillaceae</taxon>
        <taxon>Geobacillus</taxon>
    </lineage>
</organism>
<comment type="function">
    <text evidence="1">Catalyzes phosphorolysis of the pyrimidine nucleosides uridine, thymidine and 2'-deoxyuridine with the formation of the corresponding pyrimidine base and ribose-1-phosphate.</text>
</comment>
<comment type="catalytic activity">
    <reaction evidence="1">
        <text>uridine + phosphate = alpha-D-ribose 1-phosphate + uracil</text>
        <dbReference type="Rhea" id="RHEA:24388"/>
        <dbReference type="ChEBI" id="CHEBI:16704"/>
        <dbReference type="ChEBI" id="CHEBI:17568"/>
        <dbReference type="ChEBI" id="CHEBI:43474"/>
        <dbReference type="ChEBI" id="CHEBI:57720"/>
        <dbReference type="EC" id="2.4.2.2"/>
    </reaction>
</comment>
<comment type="catalytic activity">
    <reaction evidence="1">
        <text>thymidine + phosphate = 2-deoxy-alpha-D-ribose 1-phosphate + thymine</text>
        <dbReference type="Rhea" id="RHEA:16037"/>
        <dbReference type="ChEBI" id="CHEBI:17748"/>
        <dbReference type="ChEBI" id="CHEBI:17821"/>
        <dbReference type="ChEBI" id="CHEBI:43474"/>
        <dbReference type="ChEBI" id="CHEBI:57259"/>
        <dbReference type="EC" id="2.4.2.2"/>
    </reaction>
</comment>
<comment type="catalytic activity">
    <reaction evidence="1">
        <text>2'-deoxyuridine + phosphate = 2-deoxy-alpha-D-ribose 1-phosphate + uracil</text>
        <dbReference type="Rhea" id="RHEA:22824"/>
        <dbReference type="ChEBI" id="CHEBI:16450"/>
        <dbReference type="ChEBI" id="CHEBI:17568"/>
        <dbReference type="ChEBI" id="CHEBI:43474"/>
        <dbReference type="ChEBI" id="CHEBI:57259"/>
        <dbReference type="EC" id="2.4.2.2"/>
    </reaction>
</comment>
<comment type="cofactor">
    <cofactor evidence="2">
        <name>K(+)</name>
        <dbReference type="ChEBI" id="CHEBI:29103"/>
    </cofactor>
    <text evidence="2">Binds 1 K(+) ion per subunit.</text>
</comment>
<comment type="subunit">
    <text evidence="1">Homodimer.</text>
</comment>
<comment type="similarity">
    <text evidence="5">Belongs to the thymidine/pyrimidine-nucleoside phosphorylase family.</text>
</comment>
<gene>
    <name type="primary">pdp</name>
    <name type="synonym">pyn</name>
</gene>